<gene>
    <name evidence="1" type="primary">psbL</name>
</gene>
<geneLocation type="chloroplast"/>
<keyword id="KW-0150">Chloroplast</keyword>
<keyword id="KW-0472">Membrane</keyword>
<keyword id="KW-0602">Photosynthesis</keyword>
<keyword id="KW-0604">Photosystem II</keyword>
<keyword id="KW-0934">Plastid</keyword>
<keyword id="KW-0674">Reaction center</keyword>
<keyword id="KW-0793">Thylakoid</keyword>
<keyword id="KW-0812">Transmembrane</keyword>
<keyword id="KW-1133">Transmembrane helix</keyword>
<feature type="chain" id="PRO_0000219749" description="Photosystem II reaction center protein L">
    <location>
        <begin position="1"/>
        <end position="38"/>
    </location>
</feature>
<feature type="transmembrane region" description="Helical" evidence="1">
    <location>
        <begin position="17"/>
        <end position="37"/>
    </location>
</feature>
<evidence type="ECO:0000255" key="1">
    <source>
        <dbReference type="HAMAP-Rule" id="MF_01317"/>
    </source>
</evidence>
<accession>Q6EW38</accession>
<reference key="1">
    <citation type="journal article" date="2004" name="Mol. Biol. Evol.">
        <title>The chloroplast genome of Nymphaea alba: whole-genome analyses and the problem of identifying the most basal angiosperm.</title>
        <authorList>
            <person name="Goremykin V.V."/>
            <person name="Hirsch-Ernst K.I."/>
            <person name="Woelfl S."/>
            <person name="Hellwig F.H."/>
        </authorList>
    </citation>
    <scope>NUCLEOTIDE SEQUENCE [LARGE SCALE GENOMIC DNA]</scope>
</reference>
<sequence>MTQSNPNEQNVELNRTSLYWGLLLIFVLAVLFSNYFFN</sequence>
<name>PSBL_NYMAL</name>
<dbReference type="EMBL" id="AJ627251">
    <property type="protein sequence ID" value="CAF28608.1"/>
    <property type="molecule type" value="Genomic_DNA"/>
</dbReference>
<dbReference type="RefSeq" id="YP_053170.1">
    <property type="nucleotide sequence ID" value="NC_006050.1"/>
</dbReference>
<dbReference type="SMR" id="Q6EW38"/>
<dbReference type="GeneID" id="2896146"/>
<dbReference type="GO" id="GO:0009535">
    <property type="term" value="C:chloroplast thylakoid membrane"/>
    <property type="evidence" value="ECO:0007669"/>
    <property type="project" value="UniProtKB-SubCell"/>
</dbReference>
<dbReference type="GO" id="GO:0009539">
    <property type="term" value="C:photosystem II reaction center"/>
    <property type="evidence" value="ECO:0007669"/>
    <property type="project" value="InterPro"/>
</dbReference>
<dbReference type="GO" id="GO:0015979">
    <property type="term" value="P:photosynthesis"/>
    <property type="evidence" value="ECO:0007669"/>
    <property type="project" value="UniProtKB-UniRule"/>
</dbReference>
<dbReference type="HAMAP" id="MF_01317">
    <property type="entry name" value="PSII_PsbL"/>
    <property type="match status" value="1"/>
</dbReference>
<dbReference type="InterPro" id="IPR003372">
    <property type="entry name" value="PSII_PsbL"/>
</dbReference>
<dbReference type="InterPro" id="IPR037266">
    <property type="entry name" value="PSII_PsbL_sf"/>
</dbReference>
<dbReference type="NCBIfam" id="NF001972">
    <property type="entry name" value="PRK00753.1"/>
    <property type="match status" value="1"/>
</dbReference>
<dbReference type="Pfam" id="PF02419">
    <property type="entry name" value="PsbL"/>
    <property type="match status" value="1"/>
</dbReference>
<dbReference type="SUPFAM" id="SSF161017">
    <property type="entry name" value="Photosystem II reaction center protein L, PsbL"/>
    <property type="match status" value="1"/>
</dbReference>
<organism>
    <name type="scientific">Nymphaea alba</name>
    <name type="common">White water-lily</name>
    <name type="synonym">Castalia alba</name>
    <dbReference type="NCBI Taxonomy" id="34301"/>
    <lineage>
        <taxon>Eukaryota</taxon>
        <taxon>Viridiplantae</taxon>
        <taxon>Streptophyta</taxon>
        <taxon>Embryophyta</taxon>
        <taxon>Tracheophyta</taxon>
        <taxon>Spermatophyta</taxon>
        <taxon>Magnoliopsida</taxon>
        <taxon>Nymphaeales</taxon>
        <taxon>Nymphaeaceae</taxon>
        <taxon>Nymphaea</taxon>
    </lineage>
</organism>
<comment type="function">
    <text evidence="1">One of the components of the core complex of photosystem II (PSII). PSII is a light-driven water:plastoquinone oxidoreductase that uses light energy to abstract electrons from H(2)O, generating O(2) and a proton gradient subsequently used for ATP formation. It consists of a core antenna complex that captures photons, and an electron transfer chain that converts photonic excitation into a charge separation. This subunit is found at the monomer-monomer interface and is required for correct PSII assembly and/or dimerization.</text>
</comment>
<comment type="subunit">
    <text evidence="1">PSII is composed of 1 copy each of membrane proteins PsbA, PsbB, PsbC, PsbD, PsbE, PsbF, PsbH, PsbI, PsbJ, PsbK, PsbL, PsbM, PsbT, PsbX, PsbY, PsbZ, Psb30/Ycf12, at least 3 peripheral proteins of the oxygen-evolving complex and a large number of cofactors. It forms dimeric complexes.</text>
</comment>
<comment type="subcellular location">
    <subcellularLocation>
        <location evidence="1">Plastid</location>
        <location evidence="1">Chloroplast thylakoid membrane</location>
        <topology evidence="1">Single-pass membrane protein</topology>
    </subcellularLocation>
</comment>
<comment type="similarity">
    <text evidence="1">Belongs to the PsbL family.</text>
</comment>
<proteinExistence type="inferred from homology"/>
<protein>
    <recommendedName>
        <fullName evidence="1">Photosystem II reaction center protein L</fullName>
        <shortName evidence="1">PSII-L</shortName>
    </recommendedName>
</protein>